<gene>
    <name type="primary">rps3</name>
    <name type="ORF">SPBC16G5.14c</name>
</gene>
<keyword id="KW-0002">3D-structure</keyword>
<keyword id="KW-0963">Cytoplasm</keyword>
<keyword id="KW-0597">Phosphoprotein</keyword>
<keyword id="KW-1185">Reference proteome</keyword>
<keyword id="KW-0687">Ribonucleoprotein</keyword>
<keyword id="KW-0689">Ribosomal protein</keyword>
<keyword id="KW-0694">RNA-binding</keyword>
<evidence type="ECO:0000250" key="1">
    <source>
        <dbReference type="UniProtKB" id="P05750"/>
    </source>
</evidence>
<evidence type="ECO:0000255" key="2">
    <source>
        <dbReference type="PROSITE-ProRule" id="PRU00118"/>
    </source>
</evidence>
<evidence type="ECO:0000269" key="3">
    <source>
    </source>
</evidence>
<evidence type="ECO:0000269" key="4">
    <source>
    </source>
</evidence>
<evidence type="ECO:0000305" key="5"/>
<accession>O60128</accession>
<accession>Q14TB2</accession>
<protein>
    <recommendedName>
        <fullName evidence="5">Small ribosomal subunit protein uS3</fullName>
    </recommendedName>
    <alternativeName>
        <fullName>40S ribosomal protein S3</fullName>
    </alternativeName>
</protein>
<reference key="1">
    <citation type="submission" date="2006-07" db="EMBL/GenBank/DDBJ databases">
        <title>Isolation and characterization of Schizosaccharomyces pombe cDNA encoding ribosomal protein S3 (rps3).</title>
        <authorList>
            <person name="Torii A."/>
            <person name="Ikeda S."/>
        </authorList>
    </citation>
    <scope>NUCLEOTIDE SEQUENCE [MRNA]</scope>
</reference>
<reference key="2">
    <citation type="journal article" date="2002" name="Nature">
        <title>The genome sequence of Schizosaccharomyces pombe.</title>
        <authorList>
            <person name="Wood V."/>
            <person name="Gwilliam R."/>
            <person name="Rajandream M.A."/>
            <person name="Lyne M.H."/>
            <person name="Lyne R."/>
            <person name="Stewart A."/>
            <person name="Sgouros J.G."/>
            <person name="Peat N."/>
            <person name="Hayles J."/>
            <person name="Baker S.G."/>
            <person name="Basham D."/>
            <person name="Bowman S."/>
            <person name="Brooks K."/>
            <person name="Brown D."/>
            <person name="Brown S."/>
            <person name="Chillingworth T."/>
            <person name="Churcher C.M."/>
            <person name="Collins M."/>
            <person name="Connor R."/>
            <person name="Cronin A."/>
            <person name="Davis P."/>
            <person name="Feltwell T."/>
            <person name="Fraser A."/>
            <person name="Gentles S."/>
            <person name="Goble A."/>
            <person name="Hamlin N."/>
            <person name="Harris D.E."/>
            <person name="Hidalgo J."/>
            <person name="Hodgson G."/>
            <person name="Holroyd S."/>
            <person name="Hornsby T."/>
            <person name="Howarth S."/>
            <person name="Huckle E.J."/>
            <person name="Hunt S."/>
            <person name="Jagels K."/>
            <person name="James K.D."/>
            <person name="Jones L."/>
            <person name="Jones M."/>
            <person name="Leather S."/>
            <person name="McDonald S."/>
            <person name="McLean J."/>
            <person name="Mooney P."/>
            <person name="Moule S."/>
            <person name="Mungall K.L."/>
            <person name="Murphy L.D."/>
            <person name="Niblett D."/>
            <person name="Odell C."/>
            <person name="Oliver K."/>
            <person name="O'Neil S."/>
            <person name="Pearson D."/>
            <person name="Quail M.A."/>
            <person name="Rabbinowitsch E."/>
            <person name="Rutherford K.M."/>
            <person name="Rutter S."/>
            <person name="Saunders D."/>
            <person name="Seeger K."/>
            <person name="Sharp S."/>
            <person name="Skelton J."/>
            <person name="Simmonds M.N."/>
            <person name="Squares R."/>
            <person name="Squares S."/>
            <person name="Stevens K."/>
            <person name="Taylor K."/>
            <person name="Taylor R.G."/>
            <person name="Tivey A."/>
            <person name="Walsh S.V."/>
            <person name="Warren T."/>
            <person name="Whitehead S."/>
            <person name="Woodward J.R."/>
            <person name="Volckaert G."/>
            <person name="Aert R."/>
            <person name="Robben J."/>
            <person name="Grymonprez B."/>
            <person name="Weltjens I."/>
            <person name="Vanstreels E."/>
            <person name="Rieger M."/>
            <person name="Schaefer M."/>
            <person name="Mueller-Auer S."/>
            <person name="Gabel C."/>
            <person name="Fuchs M."/>
            <person name="Duesterhoeft A."/>
            <person name="Fritzc C."/>
            <person name="Holzer E."/>
            <person name="Moestl D."/>
            <person name="Hilbert H."/>
            <person name="Borzym K."/>
            <person name="Langer I."/>
            <person name="Beck A."/>
            <person name="Lehrach H."/>
            <person name="Reinhardt R."/>
            <person name="Pohl T.M."/>
            <person name="Eger P."/>
            <person name="Zimmermann W."/>
            <person name="Wedler H."/>
            <person name="Wambutt R."/>
            <person name="Purnelle B."/>
            <person name="Goffeau A."/>
            <person name="Cadieu E."/>
            <person name="Dreano S."/>
            <person name="Gloux S."/>
            <person name="Lelaure V."/>
            <person name="Mottier S."/>
            <person name="Galibert F."/>
            <person name="Aves S.J."/>
            <person name="Xiang Z."/>
            <person name="Hunt C."/>
            <person name="Moore K."/>
            <person name="Hurst S.M."/>
            <person name="Lucas M."/>
            <person name="Rochet M."/>
            <person name="Gaillardin C."/>
            <person name="Tallada V.A."/>
            <person name="Garzon A."/>
            <person name="Thode G."/>
            <person name="Daga R.R."/>
            <person name="Cruzado L."/>
            <person name="Jimenez J."/>
            <person name="Sanchez M."/>
            <person name="del Rey F."/>
            <person name="Benito J."/>
            <person name="Dominguez A."/>
            <person name="Revuelta J.L."/>
            <person name="Moreno S."/>
            <person name="Armstrong J."/>
            <person name="Forsburg S.L."/>
            <person name="Cerutti L."/>
            <person name="Lowe T."/>
            <person name="McCombie W.R."/>
            <person name="Paulsen I."/>
            <person name="Potashkin J."/>
            <person name="Shpakovski G.V."/>
            <person name="Ussery D."/>
            <person name="Barrell B.G."/>
            <person name="Nurse P."/>
        </authorList>
    </citation>
    <scope>NUCLEOTIDE SEQUENCE [LARGE SCALE GENOMIC DNA]</scope>
    <source>
        <strain>972 / ATCC 24843</strain>
    </source>
</reference>
<reference key="3">
    <citation type="journal article" date="2006" name="Nat. Biotechnol.">
        <title>ORFeome cloning and global analysis of protein localization in the fission yeast Schizosaccharomyces pombe.</title>
        <authorList>
            <person name="Matsuyama A."/>
            <person name="Arai R."/>
            <person name="Yashiroda Y."/>
            <person name="Shirai A."/>
            <person name="Kamata A."/>
            <person name="Sekido S."/>
            <person name="Kobayashi Y."/>
            <person name="Hashimoto A."/>
            <person name="Hamamoto M."/>
            <person name="Hiraoka Y."/>
            <person name="Horinouchi S."/>
            <person name="Yoshida M."/>
        </authorList>
    </citation>
    <scope>SUBCELLULAR LOCATION [LARGE SCALE ANALYSIS]</scope>
</reference>
<reference key="4">
    <citation type="journal article" date="2008" name="J. Proteome Res.">
        <title>Phosphoproteome analysis of fission yeast.</title>
        <authorList>
            <person name="Wilson-Grady J.T."/>
            <person name="Villen J."/>
            <person name="Gygi S.P."/>
        </authorList>
    </citation>
    <scope>PHOSPHORYLATION [LARGE SCALE ANALYSIS] AT SER-32; SER-37; SER-106 AND SER-141</scope>
    <scope>IDENTIFICATION BY MASS SPECTROMETRY</scope>
</reference>
<feature type="chain" id="PRO_0000130331" description="Small ribosomal subunit protein uS3">
    <location>
        <begin position="1"/>
        <end position="249"/>
    </location>
</feature>
<feature type="domain" description="KH type-2" evidence="2">
    <location>
        <begin position="23"/>
        <end position="94"/>
    </location>
</feature>
<feature type="modified residue" description="Phosphoserine" evidence="4">
    <location>
        <position position="32"/>
    </location>
</feature>
<feature type="modified residue" description="Phosphoserine" evidence="4">
    <location>
        <position position="37"/>
    </location>
</feature>
<feature type="modified residue" description="Phosphoserine" evidence="4">
    <location>
        <position position="106"/>
    </location>
</feature>
<feature type="modified residue" description="Phosphoserine" evidence="4">
    <location>
        <position position="141"/>
    </location>
</feature>
<comment type="function">
    <text evidence="1">Component of the ribosome, a large ribonucleoprotein complex responsible for the synthesis of proteins in the cell. The small ribosomal subunit (SSU) binds messenger RNAs (mRNAs) and translates the encoded message by selecting cognate aminoacyl-transfer RNA (tRNA) molecules. The large subunit (LSU) contains the ribosomal catalytic site termed the peptidyl transferase center (PTC), which catalyzes the formation of peptide bonds, thereby polymerizing the amino acids delivered by tRNAs into a polypeptide chain. The nascent polypeptides leave the ribosome through a tunnel in the LSU and interact with protein factors that function in enzymatic processing, targeting, and the membrane insertion of nascent chains at the exit of the ribosomal tunnel.</text>
</comment>
<comment type="subunit">
    <text evidence="1">Component of the small ribosomal subunit (SSU). Mature yeast ribosomes consist of a small (40S) and a large (60S) subunit. The 40S small subunit contains 1 molecule of ribosomal RNA (18S rRNA) and at least 33 different proteins. The large 60S subunit contains 3 rRNA molecules (25S, 5.8S and 5S rRNA) and at least 46 different proteins.</text>
</comment>
<comment type="subcellular location">
    <subcellularLocation>
        <location evidence="3">Cytoplasm</location>
    </subcellularLocation>
</comment>
<comment type="similarity">
    <text evidence="5">Belongs to the universal ribosomal protein uS3 family.</text>
</comment>
<organism>
    <name type="scientific">Schizosaccharomyces pombe (strain 972 / ATCC 24843)</name>
    <name type="common">Fission yeast</name>
    <dbReference type="NCBI Taxonomy" id="284812"/>
    <lineage>
        <taxon>Eukaryota</taxon>
        <taxon>Fungi</taxon>
        <taxon>Dikarya</taxon>
        <taxon>Ascomycota</taxon>
        <taxon>Taphrinomycotina</taxon>
        <taxon>Schizosaccharomycetes</taxon>
        <taxon>Schizosaccharomycetales</taxon>
        <taxon>Schizosaccharomycetaceae</taxon>
        <taxon>Schizosaccharomyces</taxon>
    </lineage>
</organism>
<sequence length="249" mass="27553">MSAAFTISKKRKFVADGVFYAELNEFFTRELSEEGYSGCEVRVTPSRSEIIIRATHTQDVLGEKGRRIRELTALVQKRFKFAENTVELYAEKVQNRGLCAVAQCESLRYKLLAGLAVRRAAYGVLRYVMEAGAKGCEVVISGKLRAARAKSMKFADGFMIHSGQPAVDFIDSATRHVLLRQGVLGVKVKIMLPEPKTRQKKSLPDIVVVLDPKEEEPITKPYTVINQPVEAAAAAGQEVVAEQETAVAY</sequence>
<name>RS3_SCHPO</name>
<proteinExistence type="evidence at protein level"/>
<dbReference type="EMBL" id="AB264328">
    <property type="protein sequence ID" value="BAE97279.1"/>
    <property type="molecule type" value="mRNA"/>
</dbReference>
<dbReference type="EMBL" id="CU329671">
    <property type="protein sequence ID" value="CAA19033.1"/>
    <property type="molecule type" value="Genomic_DNA"/>
</dbReference>
<dbReference type="PIR" id="T39606">
    <property type="entry name" value="T39606"/>
</dbReference>
<dbReference type="RefSeq" id="NP_596763.1">
    <property type="nucleotide sequence ID" value="NM_001023783.2"/>
</dbReference>
<dbReference type="PDB" id="9AXT">
    <property type="method" value="EM"/>
    <property type="resolution" value="2.40 A"/>
    <property type="chains" value="AG=1-249"/>
</dbReference>
<dbReference type="PDB" id="9AXV">
    <property type="method" value="EM"/>
    <property type="resolution" value="2.40 A"/>
    <property type="chains" value="AG=1-249"/>
</dbReference>
<dbReference type="PDBsum" id="9AXT"/>
<dbReference type="PDBsum" id="9AXV"/>
<dbReference type="EMDB" id="EMD-43972"/>
<dbReference type="EMDB" id="EMD-43976"/>
<dbReference type="SMR" id="O60128"/>
<dbReference type="BioGRID" id="276347">
    <property type="interactions" value="43"/>
</dbReference>
<dbReference type="FunCoup" id="O60128">
    <property type="interactions" value="584"/>
</dbReference>
<dbReference type="IntAct" id="O60128">
    <property type="interactions" value="1"/>
</dbReference>
<dbReference type="STRING" id="284812.O60128"/>
<dbReference type="iPTMnet" id="O60128"/>
<dbReference type="PaxDb" id="4896-SPBC16G5.14c.1"/>
<dbReference type="EnsemblFungi" id="SPBC16G5.14c.1">
    <property type="protein sequence ID" value="SPBC16G5.14c.1:pep"/>
    <property type="gene ID" value="SPBC16G5.14c"/>
</dbReference>
<dbReference type="GeneID" id="2539797"/>
<dbReference type="KEGG" id="spo:2539797"/>
<dbReference type="PomBase" id="SPBC16G5.14c">
    <property type="gene designation" value="rps3"/>
</dbReference>
<dbReference type="VEuPathDB" id="FungiDB:SPBC16G5.14c"/>
<dbReference type="eggNOG" id="KOG3181">
    <property type="taxonomic scope" value="Eukaryota"/>
</dbReference>
<dbReference type="HOGENOM" id="CLU_058591_2_1_1"/>
<dbReference type="InParanoid" id="O60128"/>
<dbReference type="OMA" id="NKKKWMI"/>
<dbReference type="PhylomeDB" id="O60128"/>
<dbReference type="Reactome" id="R-SPO-156827">
    <property type="pathway name" value="L13a-mediated translational silencing of Ceruloplasmin expression"/>
</dbReference>
<dbReference type="Reactome" id="R-SPO-1799339">
    <property type="pathway name" value="SRP-dependent cotranslational protein targeting to membrane"/>
</dbReference>
<dbReference type="Reactome" id="R-SPO-72649">
    <property type="pathway name" value="Translation initiation complex formation"/>
</dbReference>
<dbReference type="Reactome" id="R-SPO-72689">
    <property type="pathway name" value="Formation of a pool of free 40S subunits"/>
</dbReference>
<dbReference type="Reactome" id="R-SPO-72695">
    <property type="pathway name" value="Formation of the ternary complex, and subsequently, the 43S complex"/>
</dbReference>
<dbReference type="Reactome" id="R-SPO-72702">
    <property type="pathway name" value="Ribosomal scanning and start codon recognition"/>
</dbReference>
<dbReference type="Reactome" id="R-SPO-72706">
    <property type="pathway name" value="GTP hydrolysis and joining of the 60S ribosomal subunit"/>
</dbReference>
<dbReference type="Reactome" id="R-SPO-975956">
    <property type="pathway name" value="Nonsense Mediated Decay (NMD) independent of the Exon Junction Complex (EJC)"/>
</dbReference>
<dbReference type="Reactome" id="R-SPO-975957">
    <property type="pathway name" value="Nonsense Mediated Decay (NMD) enhanced by the Exon Junction Complex (EJC)"/>
</dbReference>
<dbReference type="PRO" id="PR:O60128"/>
<dbReference type="Proteomes" id="UP000002485">
    <property type="component" value="Chromosome II"/>
</dbReference>
<dbReference type="GO" id="GO:0005829">
    <property type="term" value="C:cytosol"/>
    <property type="evidence" value="ECO:0007005"/>
    <property type="project" value="PomBase"/>
</dbReference>
<dbReference type="GO" id="GO:0022627">
    <property type="term" value="C:cytosolic small ribosomal subunit"/>
    <property type="evidence" value="ECO:0000269"/>
    <property type="project" value="PomBase"/>
</dbReference>
<dbReference type="GO" id="GO:0005634">
    <property type="term" value="C:nucleus"/>
    <property type="evidence" value="ECO:0000318"/>
    <property type="project" value="GO_Central"/>
</dbReference>
<dbReference type="GO" id="GO:0003723">
    <property type="term" value="F:RNA binding"/>
    <property type="evidence" value="ECO:0007669"/>
    <property type="project" value="UniProtKB-KW"/>
</dbReference>
<dbReference type="GO" id="GO:0003735">
    <property type="term" value="F:structural constituent of ribosome"/>
    <property type="evidence" value="ECO:0000318"/>
    <property type="project" value="GO_Central"/>
</dbReference>
<dbReference type="GO" id="GO:0002181">
    <property type="term" value="P:cytoplasmic translation"/>
    <property type="evidence" value="ECO:0000266"/>
    <property type="project" value="PomBase"/>
</dbReference>
<dbReference type="CDD" id="cd02413">
    <property type="entry name" value="KH-II_40S_S3"/>
    <property type="match status" value="1"/>
</dbReference>
<dbReference type="FunFam" id="3.30.1140.32:FF:000004">
    <property type="entry name" value="40S ribosomal protein S3"/>
    <property type="match status" value="1"/>
</dbReference>
<dbReference type="FunFam" id="3.30.300.20:FF:000006">
    <property type="entry name" value="40S ribosomal protein S3"/>
    <property type="match status" value="1"/>
</dbReference>
<dbReference type="Gene3D" id="3.30.300.20">
    <property type="match status" value="1"/>
</dbReference>
<dbReference type="Gene3D" id="3.30.1140.32">
    <property type="entry name" value="Ribosomal protein S3, C-terminal domain"/>
    <property type="match status" value="1"/>
</dbReference>
<dbReference type="InterPro" id="IPR015946">
    <property type="entry name" value="KH_dom-like_a/b"/>
</dbReference>
<dbReference type="InterPro" id="IPR004044">
    <property type="entry name" value="KH_dom_type_2"/>
</dbReference>
<dbReference type="InterPro" id="IPR009019">
    <property type="entry name" value="KH_sf_prok-type"/>
</dbReference>
<dbReference type="InterPro" id="IPR036419">
    <property type="entry name" value="Ribosomal_S3_C_sf"/>
</dbReference>
<dbReference type="InterPro" id="IPR001351">
    <property type="entry name" value="Ribosomal_uS3_C"/>
</dbReference>
<dbReference type="InterPro" id="IPR018280">
    <property type="entry name" value="Ribosomal_uS3_CS"/>
</dbReference>
<dbReference type="InterPro" id="IPR005703">
    <property type="entry name" value="Ribosomal_uS3_euk/arc"/>
</dbReference>
<dbReference type="NCBIfam" id="NF003219">
    <property type="entry name" value="PRK04191.1"/>
    <property type="match status" value="1"/>
</dbReference>
<dbReference type="NCBIfam" id="TIGR01008">
    <property type="entry name" value="uS3_euk_arch"/>
    <property type="match status" value="1"/>
</dbReference>
<dbReference type="PANTHER" id="PTHR11760">
    <property type="entry name" value="30S/40S RIBOSOMAL PROTEIN S3"/>
    <property type="match status" value="1"/>
</dbReference>
<dbReference type="PANTHER" id="PTHR11760:SF32">
    <property type="entry name" value="SMALL RIBOSOMAL SUBUNIT PROTEIN US3"/>
    <property type="match status" value="1"/>
</dbReference>
<dbReference type="Pfam" id="PF07650">
    <property type="entry name" value="KH_2"/>
    <property type="match status" value="1"/>
</dbReference>
<dbReference type="Pfam" id="PF00189">
    <property type="entry name" value="Ribosomal_S3_C"/>
    <property type="match status" value="1"/>
</dbReference>
<dbReference type="SUPFAM" id="SSF54814">
    <property type="entry name" value="Prokaryotic type KH domain (KH-domain type II)"/>
    <property type="match status" value="1"/>
</dbReference>
<dbReference type="SUPFAM" id="SSF54821">
    <property type="entry name" value="Ribosomal protein S3 C-terminal domain"/>
    <property type="match status" value="1"/>
</dbReference>
<dbReference type="PROSITE" id="PS50823">
    <property type="entry name" value="KH_TYPE_2"/>
    <property type="match status" value="1"/>
</dbReference>
<dbReference type="PROSITE" id="PS00548">
    <property type="entry name" value="RIBOSOMAL_S3"/>
    <property type="match status" value="1"/>
</dbReference>